<organism>
    <name type="scientific">Mus musculus</name>
    <name type="common">Mouse</name>
    <dbReference type="NCBI Taxonomy" id="10090"/>
    <lineage>
        <taxon>Eukaryota</taxon>
        <taxon>Metazoa</taxon>
        <taxon>Chordata</taxon>
        <taxon>Craniata</taxon>
        <taxon>Vertebrata</taxon>
        <taxon>Euteleostomi</taxon>
        <taxon>Mammalia</taxon>
        <taxon>Eutheria</taxon>
        <taxon>Euarchontoglires</taxon>
        <taxon>Glires</taxon>
        <taxon>Rodentia</taxon>
        <taxon>Myomorpha</taxon>
        <taxon>Muroidea</taxon>
        <taxon>Muridae</taxon>
        <taxon>Murinae</taxon>
        <taxon>Mus</taxon>
        <taxon>Mus</taxon>
    </lineage>
</organism>
<sequence length="2907" mass="313818">MGRRRRLCLQPYFVWLGCVALWAQGTDGQPQPPPPKTLRPQPPPQQVRPAVAGSEGGFMGPEYRDEGAVAASRVRRRGQQEILRGPNVCGSRFHSYCCPGWKTLPGGNQCIVPICRNSCGDGFCSRPNMCTCSSGQISPTCGAKSIQQCSVRCMNGGTCADDHCQCQKGYIGTYCGQPVCENGCQNGGRCIGPNRCACVYGFTGPQCERDYRTGPCFTQVNNQMCQGQLTGIVCTKTLCCATIGRAWGHPCEMCPAQPQPCRRGFIPNIRTGACQDVDECQAIPGLCQGGNCINTVGSFECRCPAGHKQSETTQKCEDIDECSVIPGVCETGDCSNTVGSYFCLCPRGFVTSTDGSRCIDQRAGTCFSGLVNGRCAQELPGRMAKAQCCCEPGRCWSIGTIPEACPVRGSEEYRRLCLDGLPMGGIPGSSVSRPGGTGSTGNGYGPGGTGFLPIPGDNGFSPGVGGAGVGAGGQGPIITGLTILNQTIDICKHHANLCLNGRCIPTVSSYRCECNMGYKQDANGDCIDVDECTSNPCSNGDCVNTPGSYYCKCHAGFQRTPTKQACIDIDECIQNGVLCKNGRCVNTDGSFQCICNAGFELTTDGKNCVDHDECTTTNMCLNGMCINEDGSFKCVCKPGFILAPNGRYCTDVDECQTPGICMNGHCINNEGSFRCDCPPGLAVGVDGRVCVDTHMRSTCYGEIKKGVCVRPFPGAVTKSECCCANPDYGFGEPCQPCPAKNSAEFHGLCSSGIGITVDGRDINECALDPDICANGICENLRGSYRCNCNSGYEPDASGRNCIDIDECLVNRLLCDNGLCRNTPGSYSCTCPPGYVFRTETETCEDVNECESNPCVNGACRNNLGSFHCECSPGSKLSSTGLICIDSLKGTCWLNIQDNRCEVNINGATLKSECCATLGAAWGSPCERCELDAACPRGFARIKGVTCEDVNECEVFPGVCPNGRCVNSKGSFHCECPEGLTLDGTGRVCLDIRMEHCFLKWDEDECIHPVPGKFRMDACCCAVGAAWGTECEECPKPGTKEYETLCPRGPGFANRGDILTGRPFYKDINECKAFPGMCTYGKCRNTIGSFKCRCNNGFALDMEERNCTDIDECRISPDLCGSGICVNTPGSFECECFEGYESGFMMMKNCMDIDECERNPLLCRGGTCVNTEGSFQCDCPLGHELSPSREDCVDINECSLSDNLCRNGKCVNMIGTYQCSCNPGYQATPDRQGCTDIDECMIMNGGCDTQCTNSEGSYECSCSEGYALMPDGRSCADIDECENNPDICDGGQCTNIPGEYRCLCYDGFMASMDMKTCIDVNECDLNPNICMFGECENTKGSFICHCQLGYSVKKGTTGCTDVDECEIGAHNCDMHASCLNVPGSFKCSCREGWVGNGIKCIDLDECANGTHQCSINAQCVNTPGSYRCACSEGFTGDGFTCSDVDECAENTNLCENGQCLNVPGAYRCECEMGFTPASDSRSCQDIDECSFQNICVFGTCNNLPGMFHCICDDGYELDRTGGNCTDIDECADPINCVNGLCVNTPGRYECNCPPDFQLNPTGVGCVDNRVGNCYLKFGPRGDGSLSCNTEVGVGVSRSSCCCSLGKAWGNPCETCPPVNSTEYYTLCPGGEGFRPNPITIILEDIDECQELPGLCQGGNCINTFGSFQCECPQGYYLSEETRICEDIDECFAHPGVCGPGTCYNTLGNYTCICPPEYMQVNGGHNCMDMRKSFCYRSYNGTTCENELPFNVTKRMCCCTYNVGKAWNKPCEPCPTPGTADFKTICGNIPGFTFDIHTGKAVDIDECKEIPGICANGVCINQIGSFRCECPTGFSYNDLLLVCEDIDECSNGDNLCQRNADCINSPGSYRCECAAGFKLSPNGACVDRNECLEIPNVCSHGLCVDLQGSYQCICNNGFKASQDQTMCMDVDECERHPCGNGTCKNTVGSYNCLCYPGFELTHNNDCLDIDECSSFFGQVCRNGRCFNEIGSFKCLCNEGYELTPDGKNCIDTNECVALPGSCSPGTCQNLEGSFRCICPPGYEVRSENCIDINECDEDPNICLFGSCTNTPGGFQCICPPGFVLSDNGRRCFDTRQSFCFTNFENGKCSVPKAFNTTKAKCCCSKMPGEGWGDPCELCPKDDEVAFQDLCPYGHGTVPSLHDTREDVNECLESPGICSNGQCINTDGSFRCECPMGYNLDYTGVRCVDTDECSIGNPCGNGTCTNVIGSFECTCNEGFEPGPMMNCEDINECAQNPLLCAFRCMNTFGSYECTCPVGYALREDQKMCKDLDECAEGLHDCESRGMMCKNLIGTFMCICPPGMARRPDGEGCVDENECRTKPGICENGRCVNIIGSYRCECNEGFQSSSSGTECLDNRQGLCFAEVLQTMCQMASSSRNLVTKSECCCDGGRGWGHQCELCPLPGTAQYKKICPHGPGYATDGRDIDECKVMPSLCTNGQCVNTMGSFRCFCKVGYTTDISGTACVDLDECSQSPKPCNFICKNTKGSYQCSCPRGYVLQEDGKTCKDLDECQTKQHNCQFLCVNTLGGFTCKCPPGFTQHHTACIDNNECGSQPSLCGAKGICQNTPGSFSCECQRGFSLDASGLNCEDVDECDGNHRCQHGCQNILGGYRCGCPQGYVQHYQWNQCVDENECSNPGACGSASCYNTLGSYKCACPSGFSFDQFSSACHDVNECSSSKNPCSYGCSNTEGGYLCGCPPGYFRVGQGHCVSGMGFNKGQYLSVDAEAEDDENALSPEACYECKINGYTKKDGRRKRSAQEPEPASAEEQISLESVAMDSPVNMKFNLSGLGSKEHILELVPAIEPLNNHIRYVISQGNEDGVFRIHQRNGLSYLHTAKKKLAPGTYTLEITSIPLYGKKELRKLEEHNEDDYLLGVLGEALRMRLQIQLY</sequence>
<accession>Q61555</accession>
<accession>E9QJZ4</accession>
<accession>Q63957</accession>
<comment type="function">
    <molecule>Fibrillin-2</molecule>
    <text evidence="7">Fibrillins are structural components of 10-12 nm extracellular calcium-binding microfibrils, which occur either in association with elastin or in elastin-free bundles (PubMed:20855508). Fibrillin-2-containing microfibrils regulate the early process of elastic fiber assembly. Regulates osteoblast maturation by controlling TGF-beta bioavailability and calibrating TGF-beta and BMP levels, respectively (PubMed:20855508).</text>
</comment>
<comment type="function">
    <molecule>Placensin</molecule>
    <text evidence="1 9">Hormone secreted by trophoblasts that promotes trophoblast invasiveness (By similarity). Has glucogenic activity: is able to increase plasma glucose levels (PubMed:32329225).</text>
</comment>
<comment type="subunit">
    <text evidence="1">Interacts with BMP2, BMP4, BMP7, BMP10 and GDF5. Interacts with MFAP2 and MFAP5. Interacts with ADAMTSL5. Interacts with MFAP4.</text>
</comment>
<comment type="subcellular location">
    <subcellularLocation>
        <location evidence="1">Secreted</location>
    </subcellularLocation>
    <text evidence="1">Fibrillin-2 and Placensin chains are still linked together during the secretion from cells, but are subsequently separated by furin.</text>
</comment>
<comment type="subcellular location">
    <molecule>Fibrillin-2</molecule>
    <subcellularLocation>
        <location evidence="8">Secreted</location>
        <location evidence="8">Extracellular space</location>
        <location evidence="8">Extracellular matrix</location>
    </subcellularLocation>
</comment>
<comment type="subcellular location">
    <molecule>Placensin</molecule>
    <subcellularLocation>
        <location evidence="1">Secreted</location>
    </subcellularLocation>
    <text evidence="1">Secreted by placental cells.</text>
</comment>
<comment type="tissue specificity">
    <text evidence="9">Widely expressed.</text>
</comment>
<comment type="developmental stage">
    <text evidence="8">Strongly expressed during the first week of osteoblast differentiation.</text>
</comment>
<comment type="PTM">
    <molecule>Placensin</molecule>
    <text evidence="1">N-glycosylated.</text>
</comment>
<comment type="PTM">
    <text evidence="1">O-glycosylated on serine residues by POGLUT2 and POGLUT3.</text>
</comment>
<comment type="disruption phenotype">
    <text evidence="5 6 7">Limb-patterning defects characterized by bilateral syndactyly due to disorganized matrix (PubMed:11470817). Digit fusion involves both soft and hard tissues and is associated with reduced apoptosis at affected sites (PubMed:11470817). Mice show a well developed and morphologically normal aortic wall (PubMed:16407178). Mice display a low bone mass phenotype that is associated with reduced bone formation (PubMed:20855508).</text>
</comment>
<comment type="similarity">
    <text evidence="11">Belongs to the fibrillin family.</text>
</comment>
<protein>
    <recommendedName>
        <fullName evidence="10">Fibrillin-2</fullName>
    </recommendedName>
    <component>
        <recommendedName>
            <fullName evidence="10">Placensin</fullName>
        </recommendedName>
    </component>
</protein>
<name>FBN2_MOUSE</name>
<keyword id="KW-0106">Calcium</keyword>
<keyword id="KW-0903">Direct protein sequencing</keyword>
<keyword id="KW-1015">Disulfide bond</keyword>
<keyword id="KW-0245">EGF-like domain</keyword>
<keyword id="KW-0272">Extracellular matrix</keyword>
<keyword id="KW-0325">Glycoprotein</keyword>
<keyword id="KW-0372">Hormone</keyword>
<keyword id="KW-1185">Reference proteome</keyword>
<keyword id="KW-0677">Repeat</keyword>
<keyword id="KW-0964">Secreted</keyword>
<keyword id="KW-0732">Signal</keyword>
<feature type="signal peptide" evidence="2">
    <location>
        <begin position="1"/>
        <end position="28"/>
    </location>
</feature>
<feature type="propeptide" id="PRO_0000436889" evidence="11">
    <location>
        <begin position="29"/>
        <end position="77"/>
    </location>
</feature>
<feature type="chain" id="PRO_0000007585" description="Fibrillin-2">
    <location>
        <begin position="78"/>
        <end position="2773"/>
    </location>
</feature>
<feature type="chain" id="PRO_0000436890" description="Placensin" evidence="1">
    <location>
        <begin position="2774"/>
        <end position="2907"/>
    </location>
</feature>
<feature type="domain" description="EGF-like 1" evidence="3">
    <location>
        <begin position="111"/>
        <end position="142"/>
    </location>
</feature>
<feature type="domain" description="EGF-like 2" evidence="3">
    <location>
        <begin position="145"/>
        <end position="176"/>
    </location>
</feature>
<feature type="domain" description="EGF-like 3" evidence="3">
    <location>
        <begin position="176"/>
        <end position="208"/>
    </location>
</feature>
<feature type="domain" description="TB 1">
    <location>
        <begin position="214"/>
        <end position="266"/>
    </location>
</feature>
<feature type="domain" description="EGF-like 4; calcium-binding" evidence="3">
    <location>
        <begin position="276"/>
        <end position="317"/>
    </location>
</feature>
<feature type="domain" description="EGF-like 5; calcium-binding" evidence="3">
    <location>
        <begin position="318"/>
        <end position="359"/>
    </location>
</feature>
<feature type="domain" description="TB 2">
    <location>
        <begin position="364"/>
        <end position="417"/>
    </location>
</feature>
<feature type="domain" description="EGF-like 6" evidence="3">
    <location>
        <begin position="487"/>
        <end position="527"/>
    </location>
</feature>
<feature type="domain" description="EGF-like 7; calcium-binding" evidence="3">
    <location>
        <begin position="528"/>
        <end position="567"/>
    </location>
</feature>
<feature type="domain" description="EGF-like 8; calcium-binding" evidence="3">
    <location>
        <begin position="568"/>
        <end position="609"/>
    </location>
</feature>
<feature type="domain" description="EGF-like 9; calcium-binding" evidence="3">
    <location>
        <begin position="610"/>
        <end position="650"/>
    </location>
</feature>
<feature type="domain" description="EGF-like 10; calcium-binding" evidence="3">
    <location>
        <begin position="651"/>
        <end position="691"/>
    </location>
</feature>
<feature type="domain" description="TB 3">
    <location>
        <begin position="697"/>
        <end position="749"/>
    </location>
</feature>
<feature type="domain" description="EGF-like 11; calcium-binding" evidence="3">
    <location>
        <begin position="761"/>
        <end position="802"/>
    </location>
</feature>
<feature type="domain" description="EGF-like 12; calcium-binding" evidence="3">
    <location>
        <begin position="803"/>
        <end position="844"/>
    </location>
</feature>
<feature type="domain" description="EGF-like 13; calcium-binding" evidence="3">
    <location>
        <begin position="845"/>
        <end position="883"/>
    </location>
</feature>
<feature type="domain" description="TB 4">
    <location>
        <begin position="889"/>
        <end position="940"/>
    </location>
</feature>
<feature type="domain" description="EGF-like 14; calcium-binding" evidence="3">
    <location>
        <begin position="948"/>
        <end position="989"/>
    </location>
</feature>
<feature type="domain" description="TB 5">
    <location>
        <begin position="994"/>
        <end position="1045"/>
    </location>
</feature>
<feature type="domain" description="EGF-like 15; calcium-binding" evidence="3">
    <location>
        <begin position="1066"/>
        <end position="1107"/>
    </location>
</feature>
<feature type="domain" description="EGF-like 16; calcium-binding" evidence="3">
    <location>
        <begin position="1108"/>
        <end position="1150"/>
    </location>
</feature>
<feature type="domain" description="EGF-like 17; calcium-binding" evidence="3">
    <location>
        <begin position="1151"/>
        <end position="1192"/>
    </location>
</feature>
<feature type="domain" description="EGF-like 18; calcium-binding" evidence="3">
    <location>
        <begin position="1193"/>
        <end position="1234"/>
    </location>
</feature>
<feature type="domain" description="EGF-like 19; calcium-binding" evidence="3">
    <location>
        <begin position="1235"/>
        <end position="1275"/>
    </location>
</feature>
<feature type="domain" description="EGF-like 20; calcium-binding" evidence="3">
    <location>
        <begin position="1276"/>
        <end position="1317"/>
    </location>
</feature>
<feature type="domain" description="EGF-like 21; calcium-binding" evidence="3">
    <location>
        <begin position="1318"/>
        <end position="1359"/>
    </location>
</feature>
<feature type="domain" description="EGF-like 22; calcium-binding" evidence="3">
    <location>
        <begin position="1360"/>
        <end position="1400"/>
    </location>
</feature>
<feature type="domain" description="EGF-like 23; calcium-binding" evidence="3">
    <location>
        <begin position="1401"/>
        <end position="1441"/>
    </location>
</feature>
<feature type="domain" description="EGF-like 24; calcium-binding" evidence="3">
    <location>
        <begin position="1442"/>
        <end position="1483"/>
    </location>
</feature>
<feature type="domain" description="EGF-like 25; calcium-binding" evidence="3">
    <location>
        <begin position="1484"/>
        <end position="1524"/>
    </location>
</feature>
<feature type="domain" description="EGF-like 26; calcium-binding" evidence="3">
    <location>
        <begin position="1525"/>
        <end position="1565"/>
    </location>
</feature>
<feature type="domain" description="TB 6">
    <location>
        <begin position="1570"/>
        <end position="1626"/>
    </location>
</feature>
<feature type="domain" description="EGF-like 27; calcium-binding" evidence="3">
    <location>
        <begin position="1643"/>
        <end position="1684"/>
    </location>
</feature>
<feature type="domain" description="EGF-like 28; calcium-binding" evidence="3">
    <location>
        <begin position="1685"/>
        <end position="1726"/>
    </location>
</feature>
<feature type="domain" description="TB 7">
    <location>
        <begin position="1731"/>
        <end position="1784"/>
    </location>
</feature>
<feature type="domain" description="EGF-like 29; calcium-binding" evidence="3">
    <location>
        <begin position="1801"/>
        <end position="1842"/>
    </location>
</feature>
<feature type="domain" description="EGF-like 30; calcium-binding" evidence="3">
    <location>
        <begin position="1843"/>
        <end position="1884"/>
    </location>
</feature>
<feature type="domain" description="EGF-like 31; calcium-binding" evidence="3">
    <location>
        <begin position="1885"/>
        <end position="1926"/>
    </location>
</feature>
<feature type="domain" description="EGF-like 32; calcium-binding" evidence="3">
    <location>
        <begin position="1927"/>
        <end position="1965"/>
    </location>
</feature>
<feature type="domain" description="EGF-like 33; calcium-binding" evidence="3">
    <location>
        <begin position="1966"/>
        <end position="2008"/>
    </location>
</feature>
<feature type="domain" description="EGF-like 34; calcium-binding" evidence="3">
    <location>
        <begin position="2009"/>
        <end position="2048"/>
    </location>
</feature>
<feature type="domain" description="EGF-like 35; calcium-binding" evidence="3">
    <location>
        <begin position="2049"/>
        <end position="2090"/>
    </location>
</feature>
<feature type="domain" description="TB 8">
    <location>
        <begin position="2095"/>
        <end position="2148"/>
    </location>
</feature>
<feature type="domain" description="EGF-like 36; calcium-binding" evidence="3">
    <location>
        <begin position="2164"/>
        <end position="2205"/>
    </location>
</feature>
<feature type="domain" description="EGF-like 37; calcium-binding" evidence="3">
    <location>
        <begin position="2206"/>
        <end position="2245"/>
    </location>
</feature>
<feature type="domain" description="EGF-like 38; calcium-binding" evidence="3">
    <location>
        <begin position="2246"/>
        <end position="2286"/>
    </location>
</feature>
<feature type="domain" description="EGF-like 39; calcium-binding" evidence="3">
    <location>
        <begin position="2287"/>
        <end position="2330"/>
    </location>
</feature>
<feature type="domain" description="EGF-like 40; calcium-binding" evidence="3">
    <location>
        <begin position="2331"/>
        <end position="2372"/>
    </location>
</feature>
<feature type="domain" description="TB 9">
    <location>
        <begin position="2377"/>
        <end position="2430"/>
    </location>
</feature>
<feature type="domain" description="EGF-like 41; calcium-binding" evidence="3">
    <location>
        <begin position="2442"/>
        <end position="2483"/>
    </location>
</feature>
<feature type="domain" description="EGF-like 42; calcium-binding" evidence="3">
    <location>
        <begin position="2484"/>
        <end position="2524"/>
    </location>
</feature>
<feature type="domain" description="EGF-like 43; calcium-binding" evidence="3">
    <location>
        <begin position="2525"/>
        <end position="2563"/>
    </location>
</feature>
<feature type="domain" description="EGF-like 44; calcium-binding" evidence="3">
    <location>
        <begin position="2564"/>
        <end position="2606"/>
    </location>
</feature>
<feature type="domain" description="EGF-like 45; calcium-binding" evidence="3">
    <location>
        <begin position="2607"/>
        <end position="2646"/>
    </location>
</feature>
<feature type="domain" description="EGF-like 46; calcium-binding" evidence="3">
    <location>
        <begin position="2647"/>
        <end position="2687"/>
    </location>
</feature>
<feature type="domain" description="EGF-like 47; calcium-binding" evidence="3">
    <location>
        <begin position="2688"/>
        <end position="2727"/>
    </location>
</feature>
<feature type="region of interest" description="Disordered" evidence="4">
    <location>
        <begin position="26"/>
        <end position="58"/>
    </location>
</feature>
<feature type="region of interest" description="Interaction with MFAP4" evidence="1">
    <location>
        <begin position="149"/>
        <end position="359"/>
    </location>
</feature>
<feature type="region of interest" description="Interaction with MFAP4" evidence="1">
    <location>
        <begin position="1728"/>
        <end position="2164"/>
    </location>
</feature>
<feature type="compositionally biased region" description="Pro residues" evidence="4">
    <location>
        <begin position="30"/>
        <end position="46"/>
    </location>
</feature>
<feature type="glycosylation site" description="O-linked (Glc) serine" evidence="1">
    <location>
        <position position="298"/>
    </location>
</feature>
<feature type="glycosylation site" description="O-linked (Glc) serine" evidence="1">
    <location>
        <position position="340"/>
    </location>
</feature>
<feature type="glycosylation site" description="N-linked (GlcNAc...) asparagine" evidence="2">
    <location>
        <position position="485"/>
    </location>
</feature>
<feature type="glycosylation site" description="O-linked (Glc) serine" evidence="1">
    <location>
        <position position="509"/>
    </location>
</feature>
<feature type="glycosylation site" description="O-linked (Glc) serine" evidence="1">
    <location>
        <position position="548"/>
    </location>
</feature>
<feature type="glycosylation site" description="O-linked (Glc) serine" evidence="1">
    <location>
        <position position="590"/>
    </location>
</feature>
<feature type="glycosylation site" description="O-linked (Glc) serine" evidence="1">
    <location>
        <position position="631"/>
    </location>
</feature>
<feature type="glycosylation site" description="O-linked (Glc) serine" evidence="1">
    <location>
        <position position="672"/>
    </location>
</feature>
<feature type="glycosylation site" description="O-linked (Glc) serine" evidence="1">
    <location>
        <position position="825"/>
    </location>
</feature>
<feature type="glycosylation site" description="O-linked (Glc) serine" evidence="1">
    <location>
        <position position="865"/>
    </location>
</feature>
<feature type="glycosylation site" description="O-linked (Glc) serine" evidence="1">
    <location>
        <position position="970"/>
    </location>
</feature>
<feature type="glycosylation site" description="O-linked (Glc) serine" evidence="1">
    <location>
        <position position="1088"/>
    </location>
</feature>
<feature type="glycosylation site" description="N-linked (GlcNAc...) asparagine" evidence="2">
    <location>
        <position position="1105"/>
    </location>
</feature>
<feature type="glycosylation site" description="O-linked (Glc) serine" evidence="1">
    <location>
        <position position="1173"/>
    </location>
</feature>
<feature type="glycosylation site" description="O-linked (Glc) threonine" evidence="1">
    <location>
        <position position="1215"/>
    </location>
</feature>
<feature type="glycosylation site" description="O-linked (Glc) serine" evidence="1">
    <location>
        <position position="1256"/>
    </location>
</feature>
<feature type="glycosylation site" description="O-linked (Glc) serine" evidence="1">
    <location>
        <position position="1340"/>
    </location>
</feature>
<feature type="glycosylation site" description="O-linked (Glc) serine" evidence="1">
    <location>
        <position position="1383"/>
    </location>
</feature>
<feature type="glycosylation site" description="N-linked (GlcNAc...) asparagine" evidence="2">
    <location>
        <position position="1407"/>
    </location>
</feature>
<feature type="glycosylation site" description="N-linked (GlcNAc...) asparagine" evidence="2">
    <location>
        <position position="1522"/>
    </location>
</feature>
<feature type="glycosylation site" description="N-linked (GlcNAc...) asparagine" evidence="2">
    <location>
        <position position="1618"/>
    </location>
</feature>
<feature type="glycosylation site" description="O-linked (Glc) serine" evidence="1">
    <location>
        <position position="1665"/>
    </location>
</feature>
<feature type="glycosylation site" description="N-linked (GlcNAc...) asparagine" evidence="2">
    <location>
        <position position="1707"/>
    </location>
</feature>
<feature type="glycosylation site" description="N-linked (GlcNAc...) asparagine" evidence="2">
    <location>
        <position position="1738"/>
    </location>
</feature>
<feature type="glycosylation site" description="N-linked (GlcNAc...) asparagine" evidence="2">
    <location>
        <position position="1749"/>
    </location>
</feature>
<feature type="glycosylation site" description="O-linked (Glc) serine" evidence="1">
    <location>
        <position position="1866"/>
    </location>
</feature>
<feature type="glycosylation site" description="N-linked (GlcNAc...) asparagine" evidence="2">
    <location>
        <position position="1938"/>
    </location>
</feature>
<feature type="glycosylation site" description="O-linked (Glc) serine" evidence="1">
    <location>
        <position position="1947"/>
    </location>
</feature>
<feature type="glycosylation site" description="O-linked (Glc) serine" evidence="1">
    <location>
        <position position="1989"/>
    </location>
</feature>
<feature type="glycosylation site" description="N-linked (GlcNAc...) asparagine" evidence="2">
    <location>
        <position position="2113"/>
    </location>
</feature>
<feature type="glycosylation site" description="O-linked (Glc) serine" evidence="1">
    <location>
        <position position="2186"/>
    </location>
</feature>
<feature type="glycosylation site" description="N-linked (GlcNAc...) asparagine" evidence="2">
    <location>
        <position position="2218"/>
    </location>
</feature>
<feature type="glycosylation site" description="O-linked (Glc) serine" evidence="1">
    <location>
        <position position="2267"/>
    </location>
</feature>
<feature type="glycosylation site" description="O-linked (Glc) serine" evidence="1">
    <location>
        <position position="2353"/>
    </location>
</feature>
<feature type="glycosylation site" description="O-linked (Glc) serine" evidence="1">
    <location>
        <position position="2464"/>
    </location>
</feature>
<feature type="glycosylation site" description="O-linked (Glc) serine" evidence="1">
    <location>
        <position position="2505"/>
    </location>
</feature>
<feature type="glycosylation site" description="O-linked (Glc) serine" evidence="1">
    <location>
        <position position="2587"/>
    </location>
</feature>
<feature type="glycosylation site" description="O-linked (Glc) serine" evidence="1">
    <location>
        <position position="2668"/>
    </location>
</feature>
<feature type="glycosylation site" description="N-linked (GlcNAc...) asparagine" evidence="2">
    <location>
        <position position="2803"/>
    </location>
</feature>
<feature type="disulfide bond" evidence="3">
    <location>
        <begin position="115"/>
        <end position="124"/>
    </location>
</feature>
<feature type="disulfide bond" evidence="3">
    <location>
        <begin position="119"/>
        <end position="130"/>
    </location>
</feature>
<feature type="disulfide bond" evidence="3">
    <location>
        <begin position="132"/>
        <end position="141"/>
    </location>
</feature>
<feature type="disulfide bond" evidence="3">
    <location>
        <begin position="149"/>
        <end position="159"/>
    </location>
</feature>
<feature type="disulfide bond" evidence="3">
    <location>
        <begin position="153"/>
        <end position="164"/>
    </location>
</feature>
<feature type="disulfide bond" evidence="3">
    <location>
        <begin position="166"/>
        <end position="175"/>
    </location>
</feature>
<feature type="disulfide bond" evidence="3">
    <location>
        <begin position="180"/>
        <end position="190"/>
    </location>
</feature>
<feature type="disulfide bond" evidence="3">
    <location>
        <begin position="184"/>
        <end position="196"/>
    </location>
</feature>
<feature type="disulfide bond" evidence="3">
    <location>
        <begin position="198"/>
        <end position="207"/>
    </location>
</feature>
<feature type="disulfide bond" evidence="3">
    <location>
        <begin position="280"/>
        <end position="292"/>
    </location>
</feature>
<feature type="disulfide bond" evidence="3">
    <location>
        <begin position="287"/>
        <end position="301"/>
    </location>
</feature>
<feature type="disulfide bond" evidence="3">
    <location>
        <begin position="303"/>
        <end position="316"/>
    </location>
</feature>
<feature type="disulfide bond" evidence="3">
    <location>
        <begin position="322"/>
        <end position="334"/>
    </location>
</feature>
<feature type="disulfide bond" evidence="3">
    <location>
        <begin position="329"/>
        <end position="343"/>
    </location>
</feature>
<feature type="disulfide bond" evidence="3">
    <location>
        <begin position="345"/>
        <end position="358"/>
    </location>
</feature>
<feature type="disulfide bond" evidence="3">
    <location>
        <begin position="491"/>
        <end position="503"/>
    </location>
</feature>
<feature type="disulfide bond" evidence="3">
    <location>
        <begin position="498"/>
        <end position="512"/>
    </location>
</feature>
<feature type="disulfide bond" evidence="3">
    <location>
        <begin position="514"/>
        <end position="526"/>
    </location>
</feature>
<feature type="disulfide bond" evidence="3">
    <location>
        <begin position="532"/>
        <end position="542"/>
    </location>
</feature>
<feature type="disulfide bond" evidence="3">
    <location>
        <begin position="537"/>
        <end position="551"/>
    </location>
</feature>
<feature type="disulfide bond" evidence="3">
    <location>
        <begin position="553"/>
        <end position="566"/>
    </location>
</feature>
<feature type="disulfide bond" evidence="3">
    <location>
        <begin position="572"/>
        <end position="584"/>
    </location>
</feature>
<feature type="disulfide bond" evidence="3">
    <location>
        <begin position="579"/>
        <end position="593"/>
    </location>
</feature>
<feature type="disulfide bond" evidence="3">
    <location>
        <begin position="595"/>
        <end position="608"/>
    </location>
</feature>
<feature type="disulfide bond" evidence="3">
    <location>
        <begin position="614"/>
        <end position="625"/>
    </location>
</feature>
<feature type="disulfide bond" evidence="3">
    <location>
        <begin position="620"/>
        <end position="634"/>
    </location>
</feature>
<feature type="disulfide bond" evidence="3">
    <location>
        <begin position="636"/>
        <end position="649"/>
    </location>
</feature>
<feature type="disulfide bond" evidence="3">
    <location>
        <begin position="655"/>
        <end position="666"/>
    </location>
</feature>
<feature type="disulfide bond" evidence="3">
    <location>
        <begin position="661"/>
        <end position="675"/>
    </location>
</feature>
<feature type="disulfide bond" evidence="3">
    <location>
        <begin position="677"/>
        <end position="690"/>
    </location>
</feature>
<feature type="disulfide bond" evidence="3">
    <location>
        <begin position="765"/>
        <end position="777"/>
    </location>
</feature>
<feature type="disulfide bond" evidence="3">
    <location>
        <begin position="772"/>
        <end position="786"/>
    </location>
</feature>
<feature type="disulfide bond" evidence="3">
    <location>
        <begin position="788"/>
        <end position="801"/>
    </location>
</feature>
<feature type="disulfide bond" evidence="3">
    <location>
        <begin position="807"/>
        <end position="819"/>
    </location>
</feature>
<feature type="disulfide bond" evidence="3">
    <location>
        <begin position="814"/>
        <end position="828"/>
    </location>
</feature>
<feature type="disulfide bond" evidence="3">
    <location>
        <begin position="830"/>
        <end position="843"/>
    </location>
</feature>
<feature type="disulfide bond" evidence="3">
    <location>
        <begin position="849"/>
        <end position="859"/>
    </location>
</feature>
<feature type="disulfide bond" evidence="3">
    <location>
        <begin position="854"/>
        <end position="868"/>
    </location>
</feature>
<feature type="disulfide bond" evidence="3">
    <location>
        <begin position="870"/>
        <end position="883"/>
    </location>
</feature>
<feature type="disulfide bond" evidence="3">
    <location>
        <begin position="952"/>
        <end position="964"/>
    </location>
</feature>
<feature type="disulfide bond" evidence="3">
    <location>
        <begin position="959"/>
        <end position="973"/>
    </location>
</feature>
<feature type="disulfide bond" evidence="3">
    <location>
        <begin position="975"/>
        <end position="988"/>
    </location>
</feature>
<feature type="disulfide bond" evidence="3">
    <location>
        <begin position="1070"/>
        <end position="1082"/>
    </location>
</feature>
<feature type="disulfide bond" evidence="3">
    <location>
        <begin position="1077"/>
        <end position="1091"/>
    </location>
</feature>
<feature type="disulfide bond" evidence="3">
    <location>
        <begin position="1093"/>
        <end position="1106"/>
    </location>
</feature>
<feature type="disulfide bond" evidence="3">
    <location>
        <begin position="1112"/>
        <end position="1124"/>
    </location>
</feature>
<feature type="disulfide bond" evidence="3">
    <location>
        <begin position="1119"/>
        <end position="1133"/>
    </location>
</feature>
<feature type="disulfide bond" evidence="3">
    <location>
        <begin position="1135"/>
        <end position="1149"/>
    </location>
</feature>
<feature type="disulfide bond" evidence="3">
    <location>
        <begin position="1155"/>
        <end position="1167"/>
    </location>
</feature>
<feature type="disulfide bond" evidence="3">
    <location>
        <begin position="1162"/>
        <end position="1176"/>
    </location>
</feature>
<feature type="disulfide bond" evidence="3">
    <location>
        <begin position="1178"/>
        <end position="1191"/>
    </location>
</feature>
<feature type="disulfide bond" evidence="3">
    <location>
        <begin position="1197"/>
        <end position="1209"/>
    </location>
</feature>
<feature type="disulfide bond" evidence="3">
    <location>
        <begin position="1204"/>
        <end position="1218"/>
    </location>
</feature>
<feature type="disulfide bond" evidence="3">
    <location>
        <begin position="1220"/>
        <end position="1233"/>
    </location>
</feature>
<feature type="disulfide bond" evidence="3">
    <location>
        <begin position="1239"/>
        <end position="1250"/>
    </location>
</feature>
<feature type="disulfide bond" evidence="3">
    <location>
        <begin position="1246"/>
        <end position="1259"/>
    </location>
</feature>
<feature type="disulfide bond" evidence="3">
    <location>
        <begin position="1261"/>
        <end position="1274"/>
    </location>
</feature>
<feature type="disulfide bond" evidence="3">
    <location>
        <begin position="1280"/>
        <end position="1292"/>
    </location>
</feature>
<feature type="disulfide bond" evidence="3">
    <location>
        <begin position="1287"/>
        <end position="1301"/>
    </location>
</feature>
<feature type="disulfide bond" evidence="3">
    <location>
        <begin position="1303"/>
        <end position="1316"/>
    </location>
</feature>
<feature type="disulfide bond" evidence="3">
    <location>
        <begin position="1322"/>
        <end position="1334"/>
    </location>
</feature>
<feature type="disulfide bond" evidence="3">
    <location>
        <begin position="1329"/>
        <end position="1343"/>
    </location>
</feature>
<feature type="disulfide bond" evidence="3">
    <location>
        <begin position="1345"/>
        <end position="1358"/>
    </location>
</feature>
<feature type="disulfide bond" evidence="3">
    <location>
        <begin position="1364"/>
        <end position="1377"/>
    </location>
</feature>
<feature type="disulfide bond" evidence="3">
    <location>
        <begin position="1371"/>
        <end position="1386"/>
    </location>
</feature>
<feature type="disulfide bond" evidence="3">
    <location>
        <begin position="1388"/>
        <end position="1399"/>
    </location>
</feature>
<feature type="disulfide bond" evidence="3">
    <location>
        <begin position="1405"/>
        <end position="1418"/>
    </location>
</feature>
<feature type="disulfide bond" evidence="3">
    <location>
        <begin position="1412"/>
        <end position="1427"/>
    </location>
</feature>
<feature type="disulfide bond" evidence="3">
    <location>
        <begin position="1429"/>
        <end position="1440"/>
    </location>
</feature>
<feature type="disulfide bond" evidence="3">
    <location>
        <begin position="1446"/>
        <end position="1458"/>
    </location>
</feature>
<feature type="disulfide bond" evidence="3">
    <location>
        <begin position="1453"/>
        <end position="1467"/>
    </location>
</feature>
<feature type="disulfide bond" evidence="3">
    <location>
        <begin position="1469"/>
        <end position="1482"/>
    </location>
</feature>
<feature type="disulfide bond" evidence="3">
    <location>
        <begin position="1488"/>
        <end position="1499"/>
    </location>
</feature>
<feature type="disulfide bond" evidence="3">
    <location>
        <begin position="1494"/>
        <end position="1508"/>
    </location>
</feature>
<feature type="disulfide bond" evidence="3">
    <location>
        <begin position="1510"/>
        <end position="1523"/>
    </location>
</feature>
<feature type="disulfide bond" evidence="3">
    <location>
        <begin position="1529"/>
        <end position="1540"/>
    </location>
</feature>
<feature type="disulfide bond" evidence="3">
    <location>
        <begin position="1535"/>
        <end position="1549"/>
    </location>
</feature>
<feature type="disulfide bond" evidence="3">
    <location>
        <begin position="1551"/>
        <end position="1564"/>
    </location>
</feature>
<feature type="disulfide bond" evidence="3">
    <location>
        <begin position="1647"/>
        <end position="1659"/>
    </location>
</feature>
<feature type="disulfide bond" evidence="3">
    <location>
        <begin position="1654"/>
        <end position="1668"/>
    </location>
</feature>
<feature type="disulfide bond" evidence="3">
    <location>
        <begin position="1670"/>
        <end position="1683"/>
    </location>
</feature>
<feature type="disulfide bond" evidence="3">
    <location>
        <begin position="1689"/>
        <end position="1701"/>
    </location>
</feature>
<feature type="disulfide bond" evidence="3">
    <location>
        <begin position="1696"/>
        <end position="1710"/>
    </location>
</feature>
<feature type="disulfide bond" evidence="3">
    <location>
        <begin position="1712"/>
        <end position="1725"/>
    </location>
</feature>
<feature type="disulfide bond" evidence="3">
    <location>
        <begin position="1805"/>
        <end position="1817"/>
    </location>
</feature>
<feature type="disulfide bond" evidence="3">
    <location>
        <begin position="1812"/>
        <end position="1826"/>
    </location>
</feature>
<feature type="disulfide bond" evidence="3">
    <location>
        <begin position="1828"/>
        <end position="1841"/>
    </location>
</feature>
<feature type="disulfide bond" evidence="3">
    <location>
        <begin position="1847"/>
        <end position="1860"/>
    </location>
</feature>
<feature type="disulfide bond" evidence="3">
    <location>
        <begin position="1854"/>
        <end position="1869"/>
    </location>
</feature>
<feature type="disulfide bond" evidence="3">
    <location>
        <begin position="1871"/>
        <end position="1883"/>
    </location>
</feature>
<feature type="disulfide bond" evidence="3">
    <location>
        <begin position="1889"/>
        <end position="1901"/>
    </location>
</feature>
<feature type="disulfide bond" evidence="3">
    <location>
        <begin position="1896"/>
        <end position="1910"/>
    </location>
</feature>
<feature type="disulfide bond" evidence="3">
    <location>
        <begin position="1912"/>
        <end position="1925"/>
    </location>
</feature>
<feature type="disulfide bond" evidence="3">
    <location>
        <begin position="1931"/>
        <end position="1941"/>
    </location>
</feature>
<feature type="disulfide bond" evidence="3">
    <location>
        <begin position="1936"/>
        <end position="1950"/>
    </location>
</feature>
<feature type="disulfide bond" evidence="3">
    <location>
        <begin position="1952"/>
        <end position="1964"/>
    </location>
</feature>
<feature type="disulfide bond" evidence="3">
    <location>
        <begin position="1970"/>
        <end position="1983"/>
    </location>
</feature>
<feature type="disulfide bond" evidence="3">
    <location>
        <begin position="1978"/>
        <end position="1992"/>
    </location>
</feature>
<feature type="disulfide bond" evidence="3">
    <location>
        <begin position="1994"/>
        <end position="2007"/>
    </location>
</feature>
<feature type="disulfide bond" evidence="3">
    <location>
        <begin position="2013"/>
        <end position="2025"/>
    </location>
</feature>
<feature type="disulfide bond" evidence="3">
    <location>
        <begin position="2020"/>
        <end position="2034"/>
    </location>
</feature>
<feature type="disulfide bond" evidence="3">
    <location>
        <begin position="2036"/>
        <end position="2047"/>
    </location>
</feature>
<feature type="disulfide bond" evidence="3">
    <location>
        <begin position="2053"/>
        <end position="2065"/>
    </location>
</feature>
<feature type="disulfide bond" evidence="3">
    <location>
        <begin position="2060"/>
        <end position="2074"/>
    </location>
</feature>
<feature type="disulfide bond" evidence="3">
    <location>
        <begin position="2076"/>
        <end position="2089"/>
    </location>
</feature>
<feature type="disulfide bond" evidence="3">
    <location>
        <begin position="2168"/>
        <end position="2180"/>
    </location>
</feature>
<feature type="disulfide bond" evidence="3">
    <location>
        <begin position="2175"/>
        <end position="2189"/>
    </location>
</feature>
<feature type="disulfide bond" evidence="3">
    <location>
        <begin position="2191"/>
        <end position="2204"/>
    </location>
</feature>
<feature type="disulfide bond" evidence="3">
    <location>
        <begin position="2210"/>
        <end position="2221"/>
    </location>
</feature>
<feature type="disulfide bond" evidence="3">
    <location>
        <begin position="2216"/>
        <end position="2230"/>
    </location>
</feature>
<feature type="disulfide bond" evidence="3">
    <location>
        <begin position="2232"/>
        <end position="2244"/>
    </location>
</feature>
<feature type="disulfide bond" evidence="3">
    <location>
        <begin position="2250"/>
        <end position="2261"/>
    </location>
</feature>
<feature type="disulfide bond" evidence="3">
    <location>
        <begin position="2257"/>
        <end position="2270"/>
    </location>
</feature>
<feature type="disulfide bond" evidence="3">
    <location>
        <begin position="2272"/>
        <end position="2285"/>
    </location>
</feature>
<feature type="disulfide bond" evidence="3">
    <location>
        <begin position="2291"/>
        <end position="2305"/>
    </location>
</feature>
<feature type="disulfide bond" evidence="3">
    <location>
        <begin position="2298"/>
        <end position="2314"/>
    </location>
</feature>
<feature type="disulfide bond" evidence="3">
    <location>
        <begin position="2316"/>
        <end position="2329"/>
    </location>
</feature>
<feature type="disulfide bond" evidence="3">
    <location>
        <begin position="2335"/>
        <end position="2347"/>
    </location>
</feature>
<feature type="disulfide bond" evidence="3">
    <location>
        <begin position="2342"/>
        <end position="2356"/>
    </location>
</feature>
<feature type="disulfide bond" evidence="3">
    <location>
        <begin position="2358"/>
        <end position="2371"/>
    </location>
</feature>
<feature type="disulfide bond" evidence="3">
    <location>
        <begin position="2446"/>
        <end position="2458"/>
    </location>
</feature>
<feature type="disulfide bond" evidence="3">
    <location>
        <begin position="2453"/>
        <end position="2467"/>
    </location>
</feature>
<feature type="disulfide bond" evidence="3">
    <location>
        <begin position="2469"/>
        <end position="2482"/>
    </location>
</feature>
<feature type="disulfide bond" evidence="3">
    <location>
        <begin position="2488"/>
        <end position="2499"/>
    </location>
</feature>
<feature type="disulfide bond" evidence="3">
    <location>
        <begin position="2495"/>
        <end position="2508"/>
    </location>
</feature>
<feature type="disulfide bond" evidence="3">
    <location>
        <begin position="2510"/>
        <end position="2523"/>
    </location>
</feature>
<feature type="disulfide bond" evidence="3">
    <location>
        <begin position="2529"/>
        <end position="2540"/>
    </location>
</feature>
<feature type="disulfide bond" evidence="3">
    <location>
        <begin position="2536"/>
        <end position="2549"/>
    </location>
</feature>
<feature type="disulfide bond" evidence="3">
    <location>
        <begin position="2551"/>
        <end position="2562"/>
    </location>
</feature>
<feature type="disulfide bond" evidence="3">
    <location>
        <begin position="2568"/>
        <end position="2581"/>
    </location>
</feature>
<feature type="disulfide bond" evidence="3">
    <location>
        <begin position="2575"/>
        <end position="2590"/>
    </location>
</feature>
<feature type="disulfide bond" evidence="3">
    <location>
        <begin position="2592"/>
        <end position="2605"/>
    </location>
</feature>
<feature type="disulfide bond" evidence="3">
    <location>
        <begin position="2611"/>
        <end position="2621"/>
    </location>
</feature>
<feature type="disulfide bond" evidence="3">
    <location>
        <begin position="2617"/>
        <end position="2630"/>
    </location>
</feature>
<feature type="disulfide bond" evidence="3">
    <location>
        <begin position="2632"/>
        <end position="2645"/>
    </location>
</feature>
<feature type="disulfide bond" evidence="3">
    <location>
        <begin position="2651"/>
        <end position="2662"/>
    </location>
</feature>
<feature type="disulfide bond" evidence="3">
    <location>
        <begin position="2657"/>
        <end position="2671"/>
    </location>
</feature>
<feature type="disulfide bond" evidence="3">
    <location>
        <begin position="2673"/>
        <end position="2686"/>
    </location>
</feature>
<feature type="disulfide bond" evidence="3">
    <location>
        <begin position="2692"/>
        <end position="2703"/>
    </location>
</feature>
<feature type="disulfide bond" evidence="3">
    <location>
        <begin position="2699"/>
        <end position="2712"/>
    </location>
</feature>
<feature type="disulfide bond" evidence="3">
    <location>
        <begin position="2714"/>
        <end position="2726"/>
    </location>
</feature>
<feature type="sequence conflict" description="In Ref. 1; AAA74908." evidence="11" ref="1">
    <original>R</original>
    <variation>W</variation>
    <location>
        <position position="39"/>
    </location>
</feature>
<feature type="sequence conflict" description="In Ref. 1; AAA74908." evidence="11" ref="1">
    <original>A</original>
    <variation>R</variation>
    <location>
        <position position="70"/>
    </location>
</feature>
<feature type="sequence conflict" description="In Ref. 1; AAA74908." evidence="11" ref="1">
    <original>A</original>
    <variation>R</variation>
    <location>
        <position position="143"/>
    </location>
</feature>
<feature type="sequence conflict" description="In Ref. 1; AAA74908 and 3; AAC60685." evidence="11" ref="1 3">
    <original>R</original>
    <variation>P</variation>
    <location>
        <position position="263"/>
    </location>
</feature>
<feature type="sequence conflict" description="In Ref. 1; AAA74908." evidence="11" ref="1">
    <original>T</original>
    <variation>N</variation>
    <location>
        <position position="440"/>
    </location>
</feature>
<feature type="sequence conflict" description="In Ref. 1; AAA74908." evidence="11" ref="1">
    <original>E</original>
    <variation>R</variation>
    <location>
        <position position="513"/>
    </location>
</feature>
<feature type="sequence conflict" description="In Ref. 1; AAA74908." evidence="11" ref="1">
    <original>T</original>
    <variation>S</variation>
    <location>
        <position position="587"/>
    </location>
</feature>
<feature type="sequence conflict" description="In Ref. 1; AAA74908." evidence="11" ref="1">
    <original>S</original>
    <variation>T</variation>
    <location>
        <position position="783"/>
    </location>
</feature>
<feature type="sequence conflict" description="In Ref. 1; AAA74908." evidence="11" ref="1">
    <original>FR</original>
    <variation>LP</variation>
    <location>
        <begin position="836"/>
        <end position="837"/>
    </location>
</feature>
<feature type="sequence conflict" description="In Ref. 1; AAA74908." evidence="11" ref="1">
    <original>A</original>
    <variation>G</variation>
    <location>
        <position position="919"/>
    </location>
</feature>
<feature type="sequence conflict" description="In Ref. 1; AAA74908." evidence="11" ref="1">
    <original>Y</original>
    <variation>C</variation>
    <location>
        <position position="1064"/>
    </location>
</feature>
<feature type="sequence conflict" description="In Ref. 1; AAA74908." evidence="11" ref="1">
    <original>P</original>
    <variation>A</variation>
    <location>
        <position position="1559"/>
    </location>
</feature>
<feature type="sequence conflict" description="In Ref. 1; AAA74908." evidence="11" ref="1">
    <original>V</original>
    <variation>A</variation>
    <location>
        <position position="1590"/>
    </location>
</feature>
<feature type="sequence conflict" description="In Ref. 1; AAA74908." evidence="11" ref="1">
    <original>Y</original>
    <variation>H</variation>
    <location>
        <position position="1622"/>
    </location>
</feature>
<feature type="sequence conflict" description="In Ref. 1; AAA74908." evidence="11" ref="1">
    <original>W</original>
    <variation>G</variation>
    <location>
        <position position="1765"/>
    </location>
</feature>
<feature type="sequence conflict" description="In Ref. 1; AAA74908." evidence="11" ref="1">
    <original>G</original>
    <variation>A</variation>
    <location>
        <position position="1937"/>
    </location>
</feature>
<feature type="sequence conflict" description="In Ref. 1; AAA74908." evidence="11" ref="1">
    <original>S</original>
    <variation>C</variation>
    <location>
        <position position="2227"/>
    </location>
</feature>
<feature type="sequence conflict" description="In Ref. 1; AAA74908." evidence="11" ref="1">
    <original>A</original>
    <variation>G</variation>
    <location>
        <position position="2277"/>
    </location>
</feature>
<feature type="sequence conflict" description="In Ref. 1; AAA74908." evidence="11" ref="1">
    <original>T</original>
    <variation>M</variation>
    <location>
        <position position="2475"/>
    </location>
</feature>
<feature type="sequence conflict" description="In Ref. 1; AAA74908." evidence="11" ref="1">
    <original>QGY</original>
    <variation>HGD</variation>
    <location>
        <begin position="2634"/>
        <end position="2636"/>
    </location>
</feature>
<gene>
    <name evidence="10 12" type="primary">Fbn2</name>
    <name type="synonym">Fbn-2</name>
</gene>
<proteinExistence type="evidence at protein level"/>
<evidence type="ECO:0000250" key="1">
    <source>
        <dbReference type="UniProtKB" id="P35556"/>
    </source>
</evidence>
<evidence type="ECO:0000255" key="2"/>
<evidence type="ECO:0000255" key="3">
    <source>
        <dbReference type="PROSITE-ProRule" id="PRU00076"/>
    </source>
</evidence>
<evidence type="ECO:0000256" key="4">
    <source>
        <dbReference type="SAM" id="MobiDB-lite"/>
    </source>
</evidence>
<evidence type="ECO:0000269" key="5">
    <source>
    </source>
</evidence>
<evidence type="ECO:0000269" key="6">
    <source>
    </source>
</evidence>
<evidence type="ECO:0000269" key="7">
    <source>
    </source>
</evidence>
<evidence type="ECO:0000269" key="8">
    <source>
    </source>
</evidence>
<evidence type="ECO:0000269" key="9">
    <source>
    </source>
</evidence>
<evidence type="ECO:0000303" key="10">
    <source>
    </source>
</evidence>
<evidence type="ECO:0000305" key="11"/>
<evidence type="ECO:0000312" key="12">
    <source>
        <dbReference type="MGI" id="MGI:95490"/>
    </source>
</evidence>
<dbReference type="EMBL" id="L39790">
    <property type="protein sequence ID" value="AAA74908.1"/>
    <property type="molecule type" value="Genomic_DNA"/>
</dbReference>
<dbReference type="EMBL" id="AC102317">
    <property type="status" value="NOT_ANNOTATED_CDS"/>
    <property type="molecule type" value="Genomic_DNA"/>
</dbReference>
<dbReference type="EMBL" id="AC127358">
    <property type="status" value="NOT_ANNOTATED_CDS"/>
    <property type="molecule type" value="Genomic_DNA"/>
</dbReference>
<dbReference type="EMBL" id="S69359">
    <property type="protein sequence ID" value="AAC60685.1"/>
    <property type="molecule type" value="Unassigned_DNA"/>
</dbReference>
<dbReference type="CCDS" id="CCDS37827.1"/>
<dbReference type="PIR" id="A57278">
    <property type="entry name" value="A57278"/>
</dbReference>
<dbReference type="RefSeq" id="NP_034311.2">
    <property type="nucleotide sequence ID" value="NM_010181.2"/>
</dbReference>
<dbReference type="SMR" id="Q61555"/>
<dbReference type="BioGRID" id="199608">
    <property type="interactions" value="5"/>
</dbReference>
<dbReference type="FunCoup" id="Q61555">
    <property type="interactions" value="270"/>
</dbReference>
<dbReference type="STRING" id="10090.ENSMUSP00000025497"/>
<dbReference type="GlyCosmos" id="Q61555">
    <property type="glycosylation" value="39 sites, No reported glycans"/>
</dbReference>
<dbReference type="GlyGen" id="Q61555">
    <property type="glycosylation" value="42 sites"/>
</dbReference>
<dbReference type="iPTMnet" id="Q61555"/>
<dbReference type="PhosphoSitePlus" id="Q61555"/>
<dbReference type="jPOST" id="Q61555"/>
<dbReference type="PaxDb" id="10090-ENSMUSP00000025497"/>
<dbReference type="PeptideAtlas" id="Q61555"/>
<dbReference type="ProteomicsDB" id="271877"/>
<dbReference type="Antibodypedia" id="2482">
    <property type="antibodies" value="160 antibodies from 29 providers"/>
</dbReference>
<dbReference type="DNASU" id="14119"/>
<dbReference type="Ensembl" id="ENSMUST00000025497.8">
    <property type="protein sequence ID" value="ENSMUSP00000025497.6"/>
    <property type="gene ID" value="ENSMUSG00000024598.10"/>
</dbReference>
<dbReference type="GeneID" id="14119"/>
<dbReference type="KEGG" id="mmu:14119"/>
<dbReference type="UCSC" id="uc008ezn.1">
    <property type="organism name" value="mouse"/>
</dbReference>
<dbReference type="AGR" id="MGI:95490"/>
<dbReference type="CTD" id="2201"/>
<dbReference type="MGI" id="MGI:95490">
    <property type="gene designation" value="Fbn2"/>
</dbReference>
<dbReference type="VEuPathDB" id="HostDB:ENSMUSG00000024598"/>
<dbReference type="eggNOG" id="KOG1217">
    <property type="taxonomic scope" value="Eukaryota"/>
</dbReference>
<dbReference type="GeneTree" id="ENSGT00950000183158"/>
<dbReference type="HOGENOM" id="CLU_000233_0_0_1"/>
<dbReference type="InParanoid" id="Q61555"/>
<dbReference type="OMA" id="CTPLDQC"/>
<dbReference type="OrthoDB" id="4062651at2759"/>
<dbReference type="PhylomeDB" id="Q61555"/>
<dbReference type="TreeFam" id="TF316849"/>
<dbReference type="Reactome" id="R-MMU-1474228">
    <property type="pathway name" value="Degradation of the extracellular matrix"/>
</dbReference>
<dbReference type="Reactome" id="R-MMU-1566948">
    <property type="pathway name" value="Elastic fibre formation"/>
</dbReference>
<dbReference type="Reactome" id="R-MMU-2129379">
    <property type="pathway name" value="Molecules associated with elastic fibres"/>
</dbReference>
<dbReference type="BioGRID-ORCS" id="14119">
    <property type="hits" value="2 hits in 80 CRISPR screens"/>
</dbReference>
<dbReference type="ChiTaRS" id="Fbn2">
    <property type="organism name" value="mouse"/>
</dbReference>
<dbReference type="PRO" id="PR:Q61555"/>
<dbReference type="Proteomes" id="UP000000589">
    <property type="component" value="Chromosome 18"/>
</dbReference>
<dbReference type="RNAct" id="Q61555">
    <property type="molecule type" value="protein"/>
</dbReference>
<dbReference type="Bgee" id="ENSMUSG00000024598">
    <property type="expression patterns" value="Expressed in ureter smooth muscle and 209 other cell types or tissues"/>
</dbReference>
<dbReference type="GO" id="GO:0062023">
    <property type="term" value="C:collagen-containing extracellular matrix"/>
    <property type="evidence" value="ECO:0007005"/>
    <property type="project" value="UniProtKB"/>
</dbReference>
<dbReference type="GO" id="GO:0005576">
    <property type="term" value="C:extracellular region"/>
    <property type="evidence" value="ECO:0000314"/>
    <property type="project" value="MGI"/>
</dbReference>
<dbReference type="GO" id="GO:0001527">
    <property type="term" value="C:microfibril"/>
    <property type="evidence" value="ECO:0000314"/>
    <property type="project" value="MGI"/>
</dbReference>
<dbReference type="GO" id="GO:0005509">
    <property type="term" value="F:calcium ion binding"/>
    <property type="evidence" value="ECO:0000304"/>
    <property type="project" value="MGI"/>
</dbReference>
<dbReference type="GO" id="GO:0005179">
    <property type="term" value="F:hormone activity"/>
    <property type="evidence" value="ECO:0007669"/>
    <property type="project" value="UniProtKB-KW"/>
</dbReference>
<dbReference type="GO" id="GO:0060346">
    <property type="term" value="P:bone trabecula formation"/>
    <property type="evidence" value="ECO:0000315"/>
    <property type="project" value="BHF-UCL"/>
</dbReference>
<dbReference type="GO" id="GO:0043010">
    <property type="term" value="P:camera-type eye development"/>
    <property type="evidence" value="ECO:0007669"/>
    <property type="project" value="Ensembl"/>
</dbReference>
<dbReference type="GO" id="GO:0048048">
    <property type="term" value="P:embryonic eye morphogenesis"/>
    <property type="evidence" value="ECO:0007669"/>
    <property type="project" value="Ensembl"/>
</dbReference>
<dbReference type="GO" id="GO:0030326">
    <property type="term" value="P:embryonic limb morphogenesis"/>
    <property type="evidence" value="ECO:0000315"/>
    <property type="project" value="MGI"/>
</dbReference>
<dbReference type="GO" id="GO:0035108">
    <property type="term" value="P:limb morphogenesis"/>
    <property type="evidence" value="ECO:0000315"/>
    <property type="project" value="MGI"/>
</dbReference>
<dbReference type="GO" id="GO:0030501">
    <property type="term" value="P:positive regulation of bone mineralization"/>
    <property type="evidence" value="ECO:0000315"/>
    <property type="project" value="BHF-UCL"/>
</dbReference>
<dbReference type="GO" id="GO:0045669">
    <property type="term" value="P:positive regulation of osteoblast differentiation"/>
    <property type="evidence" value="ECO:0000315"/>
    <property type="project" value="BHF-UCL"/>
</dbReference>
<dbReference type="GO" id="GO:0035583">
    <property type="term" value="P:sequestering of TGFbeta in extracellular matrix"/>
    <property type="evidence" value="ECO:0000315"/>
    <property type="project" value="BHF-UCL"/>
</dbReference>
<dbReference type="CDD" id="cd11304">
    <property type="entry name" value="Cadherin_repeat"/>
    <property type="match status" value="1"/>
</dbReference>
<dbReference type="CDD" id="cd00054">
    <property type="entry name" value="EGF_CA"/>
    <property type="match status" value="29"/>
</dbReference>
<dbReference type="FunFam" id="2.10.25.10:FF:000023">
    <property type="entry name" value="Fibrillin 2"/>
    <property type="match status" value="2"/>
</dbReference>
<dbReference type="FunFam" id="2.10.25.10:FF:000038">
    <property type="entry name" value="Fibrillin 2"/>
    <property type="match status" value="1"/>
</dbReference>
<dbReference type="FunFam" id="2.10.25.10:FF:000044">
    <property type="entry name" value="Fibrillin 2"/>
    <property type="match status" value="1"/>
</dbReference>
<dbReference type="FunFam" id="2.10.25.10:FF:000049">
    <property type="entry name" value="Fibrillin 2"/>
    <property type="match status" value="2"/>
</dbReference>
<dbReference type="FunFam" id="2.10.25.10:FF:000058">
    <property type="entry name" value="Fibrillin 2"/>
    <property type="match status" value="1"/>
</dbReference>
<dbReference type="FunFam" id="2.10.25.10:FF:000071">
    <property type="entry name" value="Fibrillin 2"/>
    <property type="match status" value="1"/>
</dbReference>
<dbReference type="FunFam" id="2.10.25.10:FF:000086">
    <property type="entry name" value="Fibrillin 2"/>
    <property type="match status" value="1"/>
</dbReference>
<dbReference type="FunFam" id="2.10.25.10:FF:000087">
    <property type="entry name" value="Fibrillin 2"/>
    <property type="match status" value="1"/>
</dbReference>
<dbReference type="FunFam" id="2.10.25.10:FF:000097">
    <property type="entry name" value="Fibrillin 2"/>
    <property type="match status" value="1"/>
</dbReference>
<dbReference type="FunFam" id="2.10.25.10:FF:000107">
    <property type="entry name" value="Fibrillin 2"/>
    <property type="match status" value="1"/>
</dbReference>
<dbReference type="FunFam" id="2.10.25.10:FF:000131">
    <property type="entry name" value="Fibrillin 2"/>
    <property type="match status" value="1"/>
</dbReference>
<dbReference type="FunFam" id="2.10.25.10:FF:000141">
    <property type="entry name" value="Fibrillin 2"/>
    <property type="match status" value="1"/>
</dbReference>
<dbReference type="FunFam" id="2.10.25.10:FF:000149">
    <property type="entry name" value="Fibrillin 2"/>
    <property type="match status" value="1"/>
</dbReference>
<dbReference type="FunFam" id="2.10.25.10:FF:000159">
    <property type="entry name" value="Fibrillin 2"/>
    <property type="match status" value="1"/>
</dbReference>
<dbReference type="FunFam" id="2.10.25.10:FF:000171">
    <property type="entry name" value="Fibrillin 2"/>
    <property type="match status" value="1"/>
</dbReference>
<dbReference type="FunFam" id="2.10.25.10:FF:000196">
    <property type="entry name" value="Fibrillin 2"/>
    <property type="match status" value="1"/>
</dbReference>
<dbReference type="FunFam" id="2.10.25.10:FF:000264">
    <property type="entry name" value="Fibrillin 2"/>
    <property type="match status" value="1"/>
</dbReference>
<dbReference type="FunFam" id="3.90.290.10:FF:000005">
    <property type="entry name" value="Fibrillin 2"/>
    <property type="match status" value="1"/>
</dbReference>
<dbReference type="FunFam" id="3.90.290.10:FF:000006">
    <property type="entry name" value="Fibrillin 2"/>
    <property type="match status" value="1"/>
</dbReference>
<dbReference type="FunFam" id="3.90.290.10:FF:000007">
    <property type="entry name" value="Fibrillin 2"/>
    <property type="match status" value="1"/>
</dbReference>
<dbReference type="FunFam" id="3.90.290.10:FF:000009">
    <property type="entry name" value="Fibrillin 2"/>
    <property type="match status" value="1"/>
</dbReference>
<dbReference type="FunFam" id="3.90.290.10:FF:000010">
    <property type="entry name" value="Fibrillin 2"/>
    <property type="match status" value="1"/>
</dbReference>
<dbReference type="FunFam" id="3.90.290.10:FF:000011">
    <property type="entry name" value="Fibrillin 2"/>
    <property type="match status" value="1"/>
</dbReference>
<dbReference type="FunFam" id="3.90.290.10:FF:000014">
    <property type="entry name" value="Fibrillin 2"/>
    <property type="match status" value="1"/>
</dbReference>
<dbReference type="FunFam" id="2.10.25.10:FF:000133">
    <property type="entry name" value="Fibrillin 3"/>
    <property type="match status" value="1"/>
</dbReference>
<dbReference type="FunFam" id="3.90.290.10:FF:000003">
    <property type="entry name" value="Fibrillin 3"/>
    <property type="match status" value="1"/>
</dbReference>
<dbReference type="FunFam" id="3.90.290.10:FF:000008">
    <property type="entry name" value="Fibrillin 3"/>
    <property type="match status" value="1"/>
</dbReference>
<dbReference type="FunFam" id="2.10.25.10:FF:000003">
    <property type="entry name" value="fibrillin-1 isoform X1"/>
    <property type="match status" value="15"/>
</dbReference>
<dbReference type="FunFam" id="2.10.25.10:FF:000002">
    <property type="entry name" value="Latent-transforming growth factor beta-binding protein 3"/>
    <property type="match status" value="1"/>
</dbReference>
<dbReference type="FunFam" id="2.10.25.10:FF:000014">
    <property type="entry name" value="Latent-transforming growth factor beta-binding protein 3"/>
    <property type="match status" value="1"/>
</dbReference>
<dbReference type="FunFam" id="2.10.25.10:FF:000010">
    <property type="entry name" value="Pro-epidermal growth factor"/>
    <property type="match status" value="2"/>
</dbReference>
<dbReference type="FunFam" id="2.10.25.10:FF:000096">
    <property type="entry name" value="Putative fibrillin 2"/>
    <property type="match status" value="1"/>
</dbReference>
<dbReference type="FunFam" id="2.10.25.10:FF:000008">
    <property type="entry name" value="Signal peptide, CUB domain, EGF-like 2"/>
    <property type="match status" value="1"/>
</dbReference>
<dbReference type="Gene3D" id="2.10.25.10">
    <property type="entry name" value="Laminin"/>
    <property type="match status" value="46"/>
</dbReference>
<dbReference type="Gene3D" id="3.90.290.10">
    <property type="entry name" value="TGF-beta binding (TB) domain"/>
    <property type="match status" value="9"/>
</dbReference>
<dbReference type="InterPro" id="IPR026823">
    <property type="entry name" value="cEGF"/>
</dbReference>
<dbReference type="InterPro" id="IPR001881">
    <property type="entry name" value="EGF-like_Ca-bd_dom"/>
</dbReference>
<dbReference type="InterPro" id="IPR013032">
    <property type="entry name" value="EGF-like_CS"/>
</dbReference>
<dbReference type="InterPro" id="IPR000742">
    <property type="entry name" value="EGF-like_dom"/>
</dbReference>
<dbReference type="InterPro" id="IPR000152">
    <property type="entry name" value="EGF-type_Asp/Asn_hydroxyl_site"/>
</dbReference>
<dbReference type="InterPro" id="IPR018097">
    <property type="entry name" value="EGF_Ca-bd_CS"/>
</dbReference>
<dbReference type="InterPro" id="IPR024731">
    <property type="entry name" value="EGF_dom"/>
</dbReference>
<dbReference type="InterPro" id="IPR049388">
    <property type="entry name" value="FBN_EGF_N"/>
</dbReference>
<dbReference type="InterPro" id="IPR040872">
    <property type="entry name" value="Fibrillin_U_N"/>
</dbReference>
<dbReference type="InterPro" id="IPR009030">
    <property type="entry name" value="Growth_fac_rcpt_cys_sf"/>
</dbReference>
<dbReference type="InterPro" id="IPR049883">
    <property type="entry name" value="NOTCH1_EGF-like"/>
</dbReference>
<dbReference type="InterPro" id="IPR017878">
    <property type="entry name" value="TB_dom"/>
</dbReference>
<dbReference type="InterPro" id="IPR036773">
    <property type="entry name" value="TB_dom_sf"/>
</dbReference>
<dbReference type="InterPro" id="IPR052080">
    <property type="entry name" value="vWF_C/EGF_Fibrillin"/>
</dbReference>
<dbReference type="PANTHER" id="PTHR47333:SF4">
    <property type="entry name" value="EGF-LIKE DOMAIN-CONTAINING PROTEIN"/>
    <property type="match status" value="1"/>
</dbReference>
<dbReference type="PANTHER" id="PTHR47333">
    <property type="entry name" value="VON WILLEBRAND FACTOR C AND EGF DOMAIN-CONTAINING PROTEIN"/>
    <property type="match status" value="1"/>
</dbReference>
<dbReference type="Pfam" id="PF12662">
    <property type="entry name" value="cEGF"/>
    <property type="match status" value="1"/>
</dbReference>
<dbReference type="Pfam" id="PF12947">
    <property type="entry name" value="EGF_3"/>
    <property type="match status" value="1"/>
</dbReference>
<dbReference type="Pfam" id="PF07645">
    <property type="entry name" value="EGF_CA"/>
    <property type="match status" value="39"/>
</dbReference>
<dbReference type="Pfam" id="PF21364">
    <property type="entry name" value="EGF_FBN_1st"/>
    <property type="match status" value="1"/>
</dbReference>
<dbReference type="Pfam" id="PF18193">
    <property type="entry name" value="Fibrillin_U_N"/>
    <property type="match status" value="1"/>
</dbReference>
<dbReference type="Pfam" id="PF14670">
    <property type="entry name" value="FXa_inhibition"/>
    <property type="match status" value="1"/>
</dbReference>
<dbReference type="Pfam" id="PF12661">
    <property type="entry name" value="hEGF"/>
    <property type="match status" value="2"/>
</dbReference>
<dbReference type="Pfam" id="PF00683">
    <property type="entry name" value="TB"/>
    <property type="match status" value="9"/>
</dbReference>
<dbReference type="PIRSF" id="PIRSF036312">
    <property type="entry name" value="Fibrillin"/>
    <property type="match status" value="1"/>
</dbReference>
<dbReference type="SMART" id="SM00181">
    <property type="entry name" value="EGF"/>
    <property type="match status" value="46"/>
</dbReference>
<dbReference type="SMART" id="SM00179">
    <property type="entry name" value="EGF_CA"/>
    <property type="match status" value="44"/>
</dbReference>
<dbReference type="SUPFAM" id="SSF57196">
    <property type="entry name" value="EGF/Laminin"/>
    <property type="match status" value="7"/>
</dbReference>
<dbReference type="SUPFAM" id="SSF57184">
    <property type="entry name" value="Growth factor receptor domain"/>
    <property type="match status" value="13"/>
</dbReference>
<dbReference type="SUPFAM" id="SSF57581">
    <property type="entry name" value="TB module/8-cys domain"/>
    <property type="match status" value="9"/>
</dbReference>
<dbReference type="PROSITE" id="PS00010">
    <property type="entry name" value="ASX_HYDROXYL"/>
    <property type="match status" value="43"/>
</dbReference>
<dbReference type="PROSITE" id="PS00022">
    <property type="entry name" value="EGF_1"/>
    <property type="match status" value="2"/>
</dbReference>
<dbReference type="PROSITE" id="PS01186">
    <property type="entry name" value="EGF_2"/>
    <property type="match status" value="37"/>
</dbReference>
<dbReference type="PROSITE" id="PS50026">
    <property type="entry name" value="EGF_3"/>
    <property type="match status" value="45"/>
</dbReference>
<dbReference type="PROSITE" id="PS01187">
    <property type="entry name" value="EGF_CA"/>
    <property type="match status" value="43"/>
</dbReference>
<dbReference type="PROSITE" id="PS51364">
    <property type="entry name" value="TB"/>
    <property type="match status" value="9"/>
</dbReference>
<reference key="1">
    <citation type="journal article" date="1995" name="J. Cell Biol.">
        <title>Developmental expression of fibrillin genes suggests heterogeneity of extracellular microfibrils.</title>
        <authorList>
            <person name="Zhang H."/>
            <person name="Hu W."/>
            <person name="Ramirez F."/>
        </authorList>
    </citation>
    <scope>NUCLEOTIDE SEQUENCE [GENOMIC DNA]</scope>
</reference>
<reference key="2">
    <citation type="journal article" date="2009" name="PLoS Biol.">
        <title>Lineage-specific biology revealed by a finished genome assembly of the mouse.</title>
        <authorList>
            <person name="Church D.M."/>
            <person name="Goodstadt L."/>
            <person name="Hillier L.W."/>
            <person name="Zody M.C."/>
            <person name="Goldstein S."/>
            <person name="She X."/>
            <person name="Bult C.J."/>
            <person name="Agarwala R."/>
            <person name="Cherry J.L."/>
            <person name="DiCuccio M."/>
            <person name="Hlavina W."/>
            <person name="Kapustin Y."/>
            <person name="Meric P."/>
            <person name="Maglott D."/>
            <person name="Birtle Z."/>
            <person name="Marques A.C."/>
            <person name="Graves T."/>
            <person name="Zhou S."/>
            <person name="Teague B."/>
            <person name="Potamousis K."/>
            <person name="Churas C."/>
            <person name="Place M."/>
            <person name="Herschleb J."/>
            <person name="Runnheim R."/>
            <person name="Forrest D."/>
            <person name="Amos-Landgraf J."/>
            <person name="Schwartz D.C."/>
            <person name="Cheng Z."/>
            <person name="Lindblad-Toh K."/>
            <person name="Eichler E.E."/>
            <person name="Ponting C.P."/>
        </authorList>
    </citation>
    <scope>NUCLEOTIDE SEQUENCE [LARGE SCALE GENOMIC DNA]</scope>
    <source>
        <strain>C57BL/6J</strain>
    </source>
</reference>
<reference key="3">
    <citation type="journal article" date="1993" name="Genomics">
        <title>Fibrillin genes map to regions of conserved mouse/human synteny on mouse chromosomes 2 and 18.</title>
        <authorList>
            <person name="Li X."/>
            <person name="Pereira L."/>
            <person name="Zhang H."/>
            <person name="Sanguineti C."/>
            <person name="Ramirez F."/>
            <person name="Bonadio J."/>
            <person name="Francke U."/>
        </authorList>
    </citation>
    <scope>NUCLEOTIDE SEQUENCE [GENOMIC DNA] OF 210-317</scope>
</reference>
<reference key="4">
    <citation type="submission" date="2009-01" db="UniProtKB">
        <authorList>
            <person name="Lubec G."/>
            <person name="Sunyer B."/>
            <person name="Chen W.-Q."/>
        </authorList>
    </citation>
    <scope>PROTEIN SEQUENCE OF 2429-2441</scope>
    <scope>IDENTIFICATION BY MASS SPECTROMETRY</scope>
    <source>
        <strain>OF1</strain>
        <tissue>Hippocampus</tissue>
    </source>
</reference>
<reference key="5">
    <citation type="journal article" date="2001" name="J. Cell Biol.">
        <title>Regulation of limb patterning by extracellular microfibrils.</title>
        <authorList>
            <person name="Arteaga-Solis E."/>
            <person name="Gayraud B."/>
            <person name="Lee S.Y."/>
            <person name="Shum L."/>
            <person name="Sakai L."/>
            <person name="Ramirez F."/>
        </authorList>
    </citation>
    <scope>DISRUPTION PHENOTYPE</scope>
</reference>
<reference key="6">
    <citation type="journal article" date="2006" name="J. Biol. Chem.">
        <title>Fibrillins 1 and 2 perform partially overlapping functions during aortic development.</title>
        <authorList>
            <person name="Carta L."/>
            <person name="Pereira L."/>
            <person name="Arteaga-Solis E."/>
            <person name="Lee-Arteaga S.Y."/>
            <person name="Lenart B."/>
            <person name="Starcher B."/>
            <person name="Merkel C.A."/>
            <person name="Sukoyan M."/>
            <person name="Kerkis A."/>
            <person name="Hazeki N."/>
            <person name="Keene D.R."/>
            <person name="Sakai L.Y."/>
            <person name="Ramirez F."/>
        </authorList>
    </citation>
    <scope>DISRUPTION PHENOTYPE</scope>
</reference>
<reference key="7">
    <citation type="journal article" date="2010" name="J. Cell Biol.">
        <title>Fibrillin-1 and -2 differentially modulate endogenous TGF-{beta} and BMP bioavailability during bone formation.</title>
        <authorList>
            <person name="Nistala H."/>
            <person name="Lee-Arteaga S."/>
            <person name="Smaldone S."/>
            <person name="Siciliano G."/>
            <person name="Carta L."/>
            <person name="Ono R.N."/>
            <person name="Sengle G."/>
            <person name="Arteaga-Solis E."/>
            <person name="Levasseur R."/>
            <person name="Ducy P."/>
            <person name="Sakai L.Y."/>
            <person name="Karsenty G."/>
            <person name="Ramirez F."/>
        </authorList>
    </citation>
    <scope>FUNCTION (FIBRILLIN-2)</scope>
    <scope>DISRUPTION PHENOTYPE</scope>
</reference>
<reference key="8">
    <citation type="journal article" date="2013" name="J. Cell Sci.">
        <title>Fibrillin-1 directly regulates osteoclast formation and function by a dual mechanism.</title>
        <authorList>
            <person name="Tiedemann K."/>
            <person name="Boraschi-Diaz I."/>
            <person name="Rajakumar I."/>
            <person name="Kaur J."/>
            <person name="Roughley P."/>
            <person name="Reinhardt D.P."/>
            <person name="Komarova S.V."/>
        </authorList>
    </citation>
    <scope>SUBCELLULAR LOCATION</scope>
    <scope>DEVELOPMENTAL STAGE</scope>
</reference>
<reference key="9">
    <citation type="journal article" date="2020" name="EMBO Rep.">
        <title>Placensin is a glucogenic hormone secreted by human placenta.</title>
        <authorList>
            <person name="Yu Y."/>
            <person name="He J.H."/>
            <person name="Hu L.L."/>
            <person name="Jiang L.L."/>
            <person name="Fang L."/>
            <person name="Yao G.D."/>
            <person name="Wang S.J."/>
            <person name="Yang Q."/>
            <person name="Guo Y."/>
            <person name="Liu L."/>
            <person name="Shang T."/>
            <person name="Sato Y."/>
            <person name="Kawamura K."/>
            <person name="Hsueh A.J."/>
            <person name="Sun Y.P."/>
        </authorList>
    </citation>
    <scope>FUNCTION (PLACENSIN)</scope>
    <scope>TISSUE SPECIFICITY</scope>
</reference>